<gene>
    <name type="ORF">SPAC32A11.02c</name>
</gene>
<proteinExistence type="inferred from homology"/>
<evidence type="ECO:0000250" key="1">
    <source>
        <dbReference type="UniProtKB" id="J9VVE7"/>
    </source>
</evidence>
<evidence type="ECO:0000256" key="2">
    <source>
        <dbReference type="SAM" id="MobiDB-lite"/>
    </source>
</evidence>
<feature type="chain" id="PRO_0000116594" description="Putative cell signaling protein">
    <location>
        <begin position="1"/>
        <end position="851"/>
    </location>
</feature>
<feature type="region of interest" description="Disordered" evidence="2">
    <location>
        <begin position="165"/>
        <end position="223"/>
    </location>
</feature>
<feature type="region of interest" description="Disordered" evidence="2">
    <location>
        <begin position="714"/>
        <end position="781"/>
    </location>
</feature>
<feature type="compositionally biased region" description="Basic and acidic residues" evidence="2">
    <location>
        <begin position="165"/>
        <end position="176"/>
    </location>
</feature>
<feature type="compositionally biased region" description="Basic and acidic residues" evidence="2">
    <location>
        <begin position="196"/>
        <end position="223"/>
    </location>
</feature>
<feature type="compositionally biased region" description="Basic and acidic residues" evidence="2">
    <location>
        <begin position="767"/>
        <end position="781"/>
    </location>
</feature>
<reference key="1">
    <citation type="journal article" date="2002" name="Nature">
        <title>The genome sequence of Schizosaccharomyces pombe.</title>
        <authorList>
            <person name="Wood V."/>
            <person name="Gwilliam R."/>
            <person name="Rajandream M.A."/>
            <person name="Lyne M.H."/>
            <person name="Lyne R."/>
            <person name="Stewart A."/>
            <person name="Sgouros J.G."/>
            <person name="Peat N."/>
            <person name="Hayles J."/>
            <person name="Baker S.G."/>
            <person name="Basham D."/>
            <person name="Bowman S."/>
            <person name="Brooks K."/>
            <person name="Brown D."/>
            <person name="Brown S."/>
            <person name="Chillingworth T."/>
            <person name="Churcher C.M."/>
            <person name="Collins M."/>
            <person name="Connor R."/>
            <person name="Cronin A."/>
            <person name="Davis P."/>
            <person name="Feltwell T."/>
            <person name="Fraser A."/>
            <person name="Gentles S."/>
            <person name="Goble A."/>
            <person name="Hamlin N."/>
            <person name="Harris D.E."/>
            <person name="Hidalgo J."/>
            <person name="Hodgson G."/>
            <person name="Holroyd S."/>
            <person name="Hornsby T."/>
            <person name="Howarth S."/>
            <person name="Huckle E.J."/>
            <person name="Hunt S."/>
            <person name="Jagels K."/>
            <person name="James K.D."/>
            <person name="Jones L."/>
            <person name="Jones M."/>
            <person name="Leather S."/>
            <person name="McDonald S."/>
            <person name="McLean J."/>
            <person name="Mooney P."/>
            <person name="Moule S."/>
            <person name="Mungall K.L."/>
            <person name="Murphy L.D."/>
            <person name="Niblett D."/>
            <person name="Odell C."/>
            <person name="Oliver K."/>
            <person name="O'Neil S."/>
            <person name="Pearson D."/>
            <person name="Quail M.A."/>
            <person name="Rabbinowitsch E."/>
            <person name="Rutherford K.M."/>
            <person name="Rutter S."/>
            <person name="Saunders D."/>
            <person name="Seeger K."/>
            <person name="Sharp S."/>
            <person name="Skelton J."/>
            <person name="Simmonds M.N."/>
            <person name="Squares R."/>
            <person name="Squares S."/>
            <person name="Stevens K."/>
            <person name="Taylor K."/>
            <person name="Taylor R.G."/>
            <person name="Tivey A."/>
            <person name="Walsh S.V."/>
            <person name="Warren T."/>
            <person name="Whitehead S."/>
            <person name="Woodward J.R."/>
            <person name="Volckaert G."/>
            <person name="Aert R."/>
            <person name="Robben J."/>
            <person name="Grymonprez B."/>
            <person name="Weltjens I."/>
            <person name="Vanstreels E."/>
            <person name="Rieger M."/>
            <person name="Schaefer M."/>
            <person name="Mueller-Auer S."/>
            <person name="Gabel C."/>
            <person name="Fuchs M."/>
            <person name="Duesterhoeft A."/>
            <person name="Fritzc C."/>
            <person name="Holzer E."/>
            <person name="Moestl D."/>
            <person name="Hilbert H."/>
            <person name="Borzym K."/>
            <person name="Langer I."/>
            <person name="Beck A."/>
            <person name="Lehrach H."/>
            <person name="Reinhardt R."/>
            <person name="Pohl T.M."/>
            <person name="Eger P."/>
            <person name="Zimmermann W."/>
            <person name="Wedler H."/>
            <person name="Wambutt R."/>
            <person name="Purnelle B."/>
            <person name="Goffeau A."/>
            <person name="Cadieu E."/>
            <person name="Dreano S."/>
            <person name="Gloux S."/>
            <person name="Lelaure V."/>
            <person name="Mottier S."/>
            <person name="Galibert F."/>
            <person name="Aves S.J."/>
            <person name="Xiang Z."/>
            <person name="Hunt C."/>
            <person name="Moore K."/>
            <person name="Hurst S.M."/>
            <person name="Lucas M."/>
            <person name="Rochet M."/>
            <person name="Gaillardin C."/>
            <person name="Tallada V.A."/>
            <person name="Garzon A."/>
            <person name="Thode G."/>
            <person name="Daga R.R."/>
            <person name="Cruzado L."/>
            <person name="Jimenez J."/>
            <person name="Sanchez M."/>
            <person name="del Rey F."/>
            <person name="Benito J."/>
            <person name="Dominguez A."/>
            <person name="Revuelta J.L."/>
            <person name="Moreno S."/>
            <person name="Armstrong J."/>
            <person name="Forsburg S.L."/>
            <person name="Cerutti L."/>
            <person name="Lowe T."/>
            <person name="McCombie W.R."/>
            <person name="Paulsen I."/>
            <person name="Potashkin J."/>
            <person name="Shpakovski G.V."/>
            <person name="Ussery D."/>
            <person name="Barrell B.G."/>
            <person name="Nurse P."/>
        </authorList>
    </citation>
    <scope>NUCLEOTIDE SEQUENCE [LARGE SCALE GENOMIC DNA]</scope>
    <source>
        <strain>972 / ATCC 24843</strain>
    </source>
</reference>
<organism>
    <name type="scientific">Schizosaccharomyces pombe (strain 972 / ATCC 24843)</name>
    <name type="common">Fission yeast</name>
    <dbReference type="NCBI Taxonomy" id="284812"/>
    <lineage>
        <taxon>Eukaryota</taxon>
        <taxon>Fungi</taxon>
        <taxon>Dikarya</taxon>
        <taxon>Ascomycota</taxon>
        <taxon>Taphrinomycotina</taxon>
        <taxon>Schizosaccharomycetes</taxon>
        <taxon>Schizosaccharomycetales</taxon>
        <taxon>Schizosaccharomycetaceae</taxon>
        <taxon>Schizosaccharomyces</taxon>
    </lineage>
</organism>
<comment type="PTM">
    <text evidence="1">Palmitoylated.</text>
</comment>
<dbReference type="EMBL" id="CU329670">
    <property type="protein sequence ID" value="CAA93699.1"/>
    <property type="molecule type" value="Genomic_DNA"/>
</dbReference>
<dbReference type="PIR" id="T38648">
    <property type="entry name" value="T38648"/>
</dbReference>
<dbReference type="RefSeq" id="NP_593775.1">
    <property type="nucleotide sequence ID" value="NM_001019204.2"/>
</dbReference>
<dbReference type="SMR" id="Q10327"/>
<dbReference type="BioGRID" id="278196">
    <property type="interactions" value="10"/>
</dbReference>
<dbReference type="STRING" id="284812.Q10327"/>
<dbReference type="iPTMnet" id="Q10327"/>
<dbReference type="PaxDb" id="4896-SPAC32A11-02c-1"/>
<dbReference type="EnsemblFungi" id="SPAC32A11.02c.1">
    <property type="protein sequence ID" value="SPAC32A11.02c.1:pep"/>
    <property type="gene ID" value="SPAC32A11.02c"/>
</dbReference>
<dbReference type="KEGG" id="spo:2541700"/>
<dbReference type="PomBase" id="SPAC32A11.02c"/>
<dbReference type="VEuPathDB" id="FungiDB:SPAC32A11.02c"/>
<dbReference type="eggNOG" id="ENOG502QYDH">
    <property type="taxonomic scope" value="Eukaryota"/>
</dbReference>
<dbReference type="HOGENOM" id="CLU_007183_1_0_1"/>
<dbReference type="InParanoid" id="Q10327"/>
<dbReference type="OMA" id="NTWHEAP"/>
<dbReference type="PhylomeDB" id="Q10327"/>
<dbReference type="PRO" id="PR:Q10327"/>
<dbReference type="Proteomes" id="UP000002485">
    <property type="component" value="Chromosome I"/>
</dbReference>
<dbReference type="Gene3D" id="3.15.10.10">
    <property type="entry name" value="Bactericidal permeability-increasing protein, domain 1"/>
    <property type="match status" value="1"/>
</dbReference>
<dbReference type="InterPro" id="IPR027842">
    <property type="entry name" value="HAM1-like_C"/>
</dbReference>
<dbReference type="InterPro" id="IPR045967">
    <property type="entry name" value="HAM1-like_N"/>
</dbReference>
<dbReference type="PANTHER" id="PTHR31138">
    <property type="entry name" value="CHROMOSOME 19, WHOLE GENOME SHOTGUN SEQUENCE"/>
    <property type="match status" value="1"/>
</dbReference>
<dbReference type="PANTHER" id="PTHR31138:SF1">
    <property type="entry name" value="PDZ DOMAIN-CONTAINING PROTEIN"/>
    <property type="match status" value="1"/>
</dbReference>
<dbReference type="Pfam" id="PF14613">
    <property type="entry name" value="HAM1_C"/>
    <property type="match status" value="1"/>
</dbReference>
<dbReference type="Pfam" id="PF19343">
    <property type="entry name" value="HAM1_N"/>
    <property type="match status" value="2"/>
</dbReference>
<keyword id="KW-0449">Lipoprotein</keyword>
<keyword id="KW-0564">Palmitate</keyword>
<keyword id="KW-1185">Reference proteome</keyword>
<sequence length="851" mass="97079">MAVAYPTDKHVVHEETGKGLEVYSIWTAISNGKMPSNKQLRGLGSSLTDGAKSVAKERQKKISDPARKFFSDFSKLIDNSFNVFAKKNEGDLLQNAIYELSQAEGSTNVNEVWNDITEDMQSQDFSTEDLKQLFLLIFNNGKLRTLLQNAIVLLGQQTTNVASKKLNEQDGKKSDNLRNGVNKVKQNMRNGASARDQAREQGSKAKDKIKNDPDAQKAKEETKQKLQDLYEEFKSVAVDLQGDPKYQHPVRSLLNLIDKFIDKLSEQSGNVTADTNEHYDRAMQYLKQLVENILNRSLDNLIDTLKQVQHDAENDEELKDWLESTRQFVRKVLLKKGYAKSDASDKEFNKLRDKGDELLNGRYKKRWQQLSSEVKKISDSASSDKDVKQLFSNYKNIYGDLIKREGGQISLKTSMCLEILRLGVPVILEKMQYFPIPRLEIEQPDFDVVLENLNLQTANVLPKLAEFRNNNFVRFSPYANITSFRENMINVHLSNIQCDLKDVNYYIKRKQGFPTFTDLGVVDLLIGKQGMVVNLTLSSFSNTMFENELPDSFFKVEDVKVDIHHIKLKIRKSRHRLLLAFLKPSLMTYVRSTVARSMELSIRHAFEQVDREWYEIHKEAKSEIEKDSSKPTEDQESKLKVYGRVAYSRISNLHKSSKEKGKDSQVRVALHKENTALNNIVLPSGNLQRSEEKRRAALSGSTWHSPAFNIFGVDDSEDSDSPWATDRGSRLYQRTKGSVKSRESRLKKEKHKNRPASKGTYTTYTSSEERQRSTEDPLSHDTLSRTILNDQIVKGNVTEIPLPPLAVNEKRASVAVSSIPSFGDDQHDIELLNSTDPRKNRILYNQPPAVA</sequence>
<accession>Q10327</accession>
<name>HAMP_SCHPO</name>
<protein>
    <recommendedName>
        <fullName evidence="1">Putative cell signaling protein</fullName>
    </recommendedName>
</protein>